<evidence type="ECO:0000255" key="1">
    <source>
        <dbReference type="HAMAP-Rule" id="MF_01328"/>
    </source>
</evidence>
<evidence type="ECO:0000305" key="2"/>
<dbReference type="EMBL" id="L77117">
    <property type="protein sequence ID" value="AAB98162.1"/>
    <property type="molecule type" value="Genomic_DNA"/>
</dbReference>
<dbReference type="PIR" id="B64322">
    <property type="entry name" value="B64322"/>
</dbReference>
<dbReference type="RefSeq" id="WP_010869672.1">
    <property type="nucleotide sequence ID" value="NC_000909.1"/>
</dbReference>
<dbReference type="SMR" id="P54015"/>
<dbReference type="FunCoup" id="P54015">
    <property type="interactions" value="182"/>
</dbReference>
<dbReference type="STRING" id="243232.MJ_0177"/>
<dbReference type="PaxDb" id="243232-MJ_0177"/>
<dbReference type="EnsemblBacteria" id="AAB98162">
    <property type="protein sequence ID" value="AAB98162"/>
    <property type="gene ID" value="MJ_0177"/>
</dbReference>
<dbReference type="GeneID" id="1451024"/>
<dbReference type="KEGG" id="mja:MJ_0177"/>
<dbReference type="eggNOG" id="arCOG04071">
    <property type="taxonomic scope" value="Archaea"/>
</dbReference>
<dbReference type="HOGENOM" id="CLU_026535_0_0_2"/>
<dbReference type="InParanoid" id="P54015"/>
<dbReference type="OrthoDB" id="10737at2157"/>
<dbReference type="PhylomeDB" id="P54015"/>
<dbReference type="Proteomes" id="UP000000805">
    <property type="component" value="Chromosome"/>
</dbReference>
<dbReference type="GO" id="GO:0022625">
    <property type="term" value="C:cytosolic large ribosomal subunit"/>
    <property type="evidence" value="ECO:0000318"/>
    <property type="project" value="GO_Central"/>
</dbReference>
<dbReference type="GO" id="GO:0003723">
    <property type="term" value="F:RNA binding"/>
    <property type="evidence" value="ECO:0000318"/>
    <property type="project" value="GO_Central"/>
</dbReference>
<dbReference type="GO" id="GO:0019843">
    <property type="term" value="F:rRNA binding"/>
    <property type="evidence" value="ECO:0007669"/>
    <property type="project" value="UniProtKB-UniRule"/>
</dbReference>
<dbReference type="GO" id="GO:0003735">
    <property type="term" value="F:structural constituent of ribosome"/>
    <property type="evidence" value="ECO:0000318"/>
    <property type="project" value="GO_Central"/>
</dbReference>
<dbReference type="GO" id="GO:0006412">
    <property type="term" value="P:translation"/>
    <property type="evidence" value="ECO:0007669"/>
    <property type="project" value="UniProtKB-UniRule"/>
</dbReference>
<dbReference type="FunFam" id="3.40.1370.10:FF:000011">
    <property type="entry name" value="50S ribosomal protein L4"/>
    <property type="match status" value="1"/>
</dbReference>
<dbReference type="Gene3D" id="3.40.1370.10">
    <property type="match status" value="1"/>
</dbReference>
<dbReference type="HAMAP" id="MF_01328_A">
    <property type="entry name" value="Ribosomal_uL4_A"/>
    <property type="match status" value="1"/>
</dbReference>
<dbReference type="InterPro" id="IPR002136">
    <property type="entry name" value="Ribosomal_uL4"/>
</dbReference>
<dbReference type="InterPro" id="IPR023574">
    <property type="entry name" value="Ribosomal_uL4_dom_sf"/>
</dbReference>
<dbReference type="InterPro" id="IPR013000">
    <property type="entry name" value="Ribosomal_uL4_euk/arc_CS"/>
</dbReference>
<dbReference type="InterPro" id="IPR045240">
    <property type="entry name" value="Ribosomal_uL4_euk/arch"/>
</dbReference>
<dbReference type="InterPro" id="IPR019970">
    <property type="entry name" value="Ribosomall_uL4-arc"/>
</dbReference>
<dbReference type="NCBIfam" id="TIGR03672">
    <property type="entry name" value="rpl4p_arch"/>
    <property type="match status" value="1"/>
</dbReference>
<dbReference type="PANTHER" id="PTHR19431">
    <property type="entry name" value="60S RIBOSOMAL PROTEIN L4"/>
    <property type="match status" value="1"/>
</dbReference>
<dbReference type="Pfam" id="PF00573">
    <property type="entry name" value="Ribosomal_L4"/>
    <property type="match status" value="1"/>
</dbReference>
<dbReference type="SUPFAM" id="SSF52166">
    <property type="entry name" value="Ribosomal protein L4"/>
    <property type="match status" value="1"/>
</dbReference>
<dbReference type="PROSITE" id="PS00939">
    <property type="entry name" value="RIBOSOMAL_L1E"/>
    <property type="match status" value="1"/>
</dbReference>
<organism>
    <name type="scientific">Methanocaldococcus jannaschii (strain ATCC 43067 / DSM 2661 / JAL-1 / JCM 10045 / NBRC 100440)</name>
    <name type="common">Methanococcus jannaschii</name>
    <dbReference type="NCBI Taxonomy" id="243232"/>
    <lineage>
        <taxon>Archaea</taxon>
        <taxon>Methanobacteriati</taxon>
        <taxon>Methanobacteriota</taxon>
        <taxon>Methanomada group</taxon>
        <taxon>Methanococci</taxon>
        <taxon>Methanococcales</taxon>
        <taxon>Methanocaldococcaceae</taxon>
        <taxon>Methanocaldococcus</taxon>
    </lineage>
</organism>
<sequence>MKAVVYNLNGEAVKEIDLPAVFEEEYRPDLIKRAFLSAFTARLQPKGSDPLAGLRTSAKNIGKGHGRARVDRVPQGWAARVPQAVGGRRAHPPKVEKILWERVNKKERIKAIKSAIAATANPELVKERGHVFETENLPIIVESSFEELQKTKDVFAVFEKLGISDDVIRAKNGIKIRAGKGKMRGRKYKKPRSILVVVGDKCNAILASRNLPGVDVITAKDLGIIHLAPGGVAGRLTVWTESALEKLKERFE</sequence>
<name>RL4_METJA</name>
<reference key="1">
    <citation type="journal article" date="1996" name="Science">
        <title>Complete genome sequence of the methanogenic archaeon, Methanococcus jannaschii.</title>
        <authorList>
            <person name="Bult C.J."/>
            <person name="White O."/>
            <person name="Olsen G.J."/>
            <person name="Zhou L."/>
            <person name="Fleischmann R.D."/>
            <person name="Sutton G.G."/>
            <person name="Blake J.A."/>
            <person name="FitzGerald L.M."/>
            <person name="Clayton R.A."/>
            <person name="Gocayne J.D."/>
            <person name="Kerlavage A.R."/>
            <person name="Dougherty B.A."/>
            <person name="Tomb J.-F."/>
            <person name="Adams M.D."/>
            <person name="Reich C.I."/>
            <person name="Overbeek R."/>
            <person name="Kirkness E.F."/>
            <person name="Weinstock K.G."/>
            <person name="Merrick J.M."/>
            <person name="Glodek A."/>
            <person name="Scott J.L."/>
            <person name="Geoghagen N.S.M."/>
            <person name="Weidman J.F."/>
            <person name="Fuhrmann J.L."/>
            <person name="Nguyen D."/>
            <person name="Utterback T.R."/>
            <person name="Kelley J.M."/>
            <person name="Peterson J.D."/>
            <person name="Sadow P.W."/>
            <person name="Hanna M.C."/>
            <person name="Cotton M.D."/>
            <person name="Roberts K.M."/>
            <person name="Hurst M.A."/>
            <person name="Kaine B.P."/>
            <person name="Borodovsky M."/>
            <person name="Klenk H.-P."/>
            <person name="Fraser C.M."/>
            <person name="Smith H.O."/>
            <person name="Woese C.R."/>
            <person name="Venter J.C."/>
        </authorList>
    </citation>
    <scope>NUCLEOTIDE SEQUENCE [LARGE SCALE GENOMIC DNA]</scope>
    <source>
        <strain>ATCC 43067 / DSM 2661 / JAL-1 / JCM 10045 / NBRC 100440</strain>
    </source>
</reference>
<accession>P54015</accession>
<comment type="function">
    <text evidence="1">One of the primary rRNA binding proteins, this protein initially binds near the 5'-end of the 23S rRNA. It is important during the early stages of 50S assembly. It makes multiple contacts with different domains of the 23S rRNA in the assembled 50S subunit and ribosome.</text>
</comment>
<comment type="function">
    <text evidence="1">Forms part of the polypeptide exit tunnel.</text>
</comment>
<comment type="subunit">
    <text evidence="1">Part of the 50S ribosomal subunit.</text>
</comment>
<comment type="similarity">
    <text evidence="1">Belongs to the universal ribosomal protein uL4 family.</text>
</comment>
<proteinExistence type="inferred from homology"/>
<keyword id="KW-1185">Reference proteome</keyword>
<keyword id="KW-0687">Ribonucleoprotein</keyword>
<keyword id="KW-0689">Ribosomal protein</keyword>
<keyword id="KW-0694">RNA-binding</keyword>
<keyword id="KW-0699">rRNA-binding</keyword>
<feature type="chain" id="PRO_0000129332" description="Large ribosomal subunit protein uL4">
    <location>
        <begin position="1"/>
        <end position="252"/>
    </location>
</feature>
<protein>
    <recommendedName>
        <fullName evidence="1">Large ribosomal subunit protein uL4</fullName>
    </recommendedName>
    <alternativeName>
        <fullName evidence="2">50S ribosomal protein L4</fullName>
    </alternativeName>
</protein>
<gene>
    <name evidence="1" type="primary">rpl4</name>
    <name type="ordered locus">MJ0177</name>
</gene>